<keyword id="KW-0963">Cytoplasm</keyword>
<keyword id="KW-0472">Membrane</keyword>
<keyword id="KW-0496">Mitochondrion</keyword>
<keyword id="KW-0999">Mitochondrion inner membrane</keyword>
<keyword id="KW-1185">Reference proteome</keyword>
<keyword id="KW-0809">Transit peptide</keyword>
<keyword id="KW-0812">Transmembrane</keyword>
<keyword id="KW-1133">Transmembrane helix</keyword>
<evidence type="ECO:0000250" key="1">
    <source>
        <dbReference type="UniProtKB" id="Q16891"/>
    </source>
</evidence>
<evidence type="ECO:0000255" key="2"/>
<evidence type="ECO:0000255" key="3">
    <source>
        <dbReference type="RuleBase" id="RU363000"/>
    </source>
</evidence>
<evidence type="ECO:0000256" key="4">
    <source>
        <dbReference type="SAM" id="MobiDB-lite"/>
    </source>
</evidence>
<evidence type="ECO:0000269" key="5">
    <source>
    </source>
</evidence>
<evidence type="ECO:0000269" key="6">
    <source>
    </source>
</evidence>
<evidence type="ECO:0000303" key="7">
    <source>
    </source>
</evidence>
<evidence type="ECO:0000305" key="8"/>
<evidence type="ECO:0000305" key="9">
    <source>
    </source>
</evidence>
<evidence type="ECO:0000312" key="10">
    <source>
        <dbReference type="Proteomes" id="UP000001940"/>
    </source>
</evidence>
<evidence type="ECO:0000312" key="11">
    <source>
        <dbReference type="WormBase" id="W06H3.1"/>
    </source>
</evidence>
<feature type="transit peptide" description="Mitochondrion" evidence="2">
    <location>
        <begin position="1"/>
        <end position="12"/>
    </location>
</feature>
<feature type="chain" id="PRO_0000438530" description="MICOS complex subunit MIC60-2" evidence="8">
    <location>
        <begin position="13"/>
        <end position="654"/>
    </location>
</feature>
<feature type="topological domain" description="Mitochondrial matrix" evidence="8">
    <location>
        <begin position="13"/>
        <end position="20"/>
    </location>
</feature>
<feature type="transmembrane region" description="Helical" evidence="2">
    <location>
        <begin position="21"/>
        <end position="43"/>
    </location>
</feature>
<feature type="topological domain" description="Mitochondrial intermembrane" evidence="8">
    <location>
        <begin position="44"/>
        <end position="654"/>
    </location>
</feature>
<feature type="region of interest" description="Disordered" evidence="4">
    <location>
        <begin position="115"/>
        <end position="140"/>
    </location>
</feature>
<feature type="compositionally biased region" description="Basic and acidic residues" evidence="4">
    <location>
        <begin position="115"/>
        <end position="129"/>
    </location>
</feature>
<protein>
    <recommendedName>
        <fullName evidence="8">MICOS complex subunit MIC60-2</fullName>
    </recommendedName>
    <alternativeName>
        <fullName evidence="7">Inner mitochondrial membrane protein 2</fullName>
    </alternativeName>
    <alternativeName>
        <fullName evidence="9">Mitofilin homolog 2</fullName>
    </alternativeName>
</protein>
<organism evidence="10">
    <name type="scientific">Caenorhabditis elegans</name>
    <dbReference type="NCBI Taxonomy" id="6239"/>
    <lineage>
        <taxon>Eukaryota</taxon>
        <taxon>Metazoa</taxon>
        <taxon>Ecdysozoa</taxon>
        <taxon>Nematoda</taxon>
        <taxon>Chromadorea</taxon>
        <taxon>Rhabditida</taxon>
        <taxon>Rhabditina</taxon>
        <taxon>Rhabditomorpha</taxon>
        <taxon>Rhabditoidea</taxon>
        <taxon>Rhabditidae</taxon>
        <taxon>Peloderinae</taxon>
        <taxon>Caenorhabditis</taxon>
    </lineage>
</organism>
<sequence>MRGSRNLLTQRLASSRATGSSGGLKFVGATVGAVTAGAAGVAGYASYDNEFRKKLEGVIPGSRTILNYTIGEEEPPAPRLKDLRPLQYSADPKVPPKPFEPKPVKKELIGVKENLKETTEPKKIEKKPENPYIGAKTPLNPQERNEKLTESLKNHLTQAEKATKVATSAKLETIRAIEHHVQTIREAIEAGKDGDWDSVTVAHLKAKRLAEKDEKAEKLARNAVADLVTEANLGGQGETTQLNPLVPISKATAEKLSNELDEMISNVKHVDSERIFVHDYSDRVAESRRKFQMELKAVHPNLNYEDGMKIKKADLHTILAHAHLRIDQLSQKLIDSKLNEEKRIQSIIAKKKEDLLEKLRLETNAKQAAVIPEFDKKKLDAELARATAEIQKKYDEKLKEVVRTQKQLYDIEHAKDVDEAVLKERNLHSSAVGKALAQLAGIEKALSGHLQMDIENRKSKQMWLATQNLKGTVIFGNRASCCMEGRRAPLGDQMKTLLSCCGGGNSDEFVKTINTAMSKTSKVRGEYTEQDLNTRFNKVCRIGRRVAYVNEGGALAHLYSWLKSSLTIELVPKKGANESLTPAVENNFTLLTRAEQLWKSGKKSDAIRVLQLTDGATRRVAADFIADARRQHEALLLSRLLLAHAALTSIRSTY</sequence>
<accession>Q9XXN2</accession>
<reference evidence="10" key="1">
    <citation type="journal article" date="1998" name="Science">
        <title>Genome sequence of the nematode C. elegans: a platform for investigating biology.</title>
        <authorList>
            <consortium name="The C. elegans sequencing consortium"/>
        </authorList>
    </citation>
    <scope>NUCLEOTIDE SEQUENCE [LARGE SCALE GENOMIC DNA]</scope>
    <source>
        <strain evidence="10">Bristol N2</strain>
    </source>
</reference>
<reference evidence="8" key="2">
    <citation type="journal article" date="2010" name="J. Cell. Physiol.">
        <title>Caenorhabditis elegans mitofilin homologs control the morphology of mitochondrial cristae and influence reproduction and physiology.</title>
        <authorList>
            <person name="Mun J.Y."/>
            <person name="Lee T.H."/>
            <person name="Kim J.H."/>
            <person name="Yoo B.H."/>
            <person name="Bahk Y.Y."/>
            <person name="Koo H.S."/>
            <person name="Han S.S."/>
        </authorList>
    </citation>
    <scope>FUNCTION</scope>
    <scope>SUBCELLULAR LOCATION</scope>
    <scope>TISSUE SPECIFICITY</scope>
    <scope>DEVELOPMENTAL STAGE</scope>
    <scope>DISRUPTION PHENOTYPE</scope>
</reference>
<reference evidence="8" key="3">
    <citation type="journal article" date="2011" name="Mol. Biol. Cell">
        <title>A novel mitochondrial outer membrane protein, MOMA-1, that affects cristae morphology in Caenorhabditis elegans.</title>
        <authorList>
            <person name="Head B.P."/>
            <person name="Zulaika M."/>
            <person name="Ryazantsev S."/>
            <person name="van der Bliek A.M."/>
        </authorList>
    </citation>
    <scope>FUNCTION</scope>
    <scope>DISRUPTION PHENOTYPE</scope>
</reference>
<dbReference type="EMBL" id="BX284605">
    <property type="protein sequence ID" value="CAA16516.2"/>
    <property type="molecule type" value="Genomic_DNA"/>
</dbReference>
<dbReference type="PIR" id="T26251">
    <property type="entry name" value="T26251"/>
</dbReference>
<dbReference type="RefSeq" id="NP_507241.2">
    <property type="nucleotide sequence ID" value="NM_074840.7"/>
</dbReference>
<dbReference type="SMR" id="Q9XXN2"/>
<dbReference type="FunCoup" id="Q9XXN2">
    <property type="interactions" value="1241"/>
</dbReference>
<dbReference type="STRING" id="6239.W06H3.1.1"/>
<dbReference type="PaxDb" id="6239-W06H3.1"/>
<dbReference type="PeptideAtlas" id="Q9XXN2"/>
<dbReference type="EnsemblMetazoa" id="W06H3.1.1">
    <property type="protein sequence ID" value="W06H3.1.1"/>
    <property type="gene ID" value="WBGene00012315"/>
</dbReference>
<dbReference type="GeneID" id="180122"/>
<dbReference type="KEGG" id="cel:CELE_W06H3.1"/>
<dbReference type="UCSC" id="W06H3.1">
    <property type="organism name" value="c. elegans"/>
</dbReference>
<dbReference type="AGR" id="WB:WBGene00012315"/>
<dbReference type="CTD" id="180122"/>
<dbReference type="WormBase" id="W06H3.1">
    <property type="protein sequence ID" value="CE36215"/>
    <property type="gene ID" value="WBGene00012315"/>
    <property type="gene designation" value="immt-2"/>
</dbReference>
<dbReference type="eggNOG" id="KOG1854">
    <property type="taxonomic scope" value="Eukaryota"/>
</dbReference>
<dbReference type="GeneTree" id="ENSGT00390000002313"/>
<dbReference type="HOGENOM" id="CLU_021851_2_0_1"/>
<dbReference type="InParanoid" id="Q9XXN2"/>
<dbReference type="OMA" id="TNCADIE"/>
<dbReference type="OrthoDB" id="10261039at2759"/>
<dbReference type="PhylomeDB" id="Q9XXN2"/>
<dbReference type="PRO" id="PR:Q9XXN2"/>
<dbReference type="Proteomes" id="UP000001940">
    <property type="component" value="Chromosome V"/>
</dbReference>
<dbReference type="Bgee" id="WBGene00012315">
    <property type="expression patterns" value="Expressed in germ line (C elegans) and 4 other cell types or tissues"/>
</dbReference>
<dbReference type="GO" id="GO:0061617">
    <property type="term" value="C:MICOS complex"/>
    <property type="evidence" value="ECO:0000318"/>
    <property type="project" value="GO_Central"/>
</dbReference>
<dbReference type="GO" id="GO:0005743">
    <property type="term" value="C:mitochondrial inner membrane"/>
    <property type="evidence" value="ECO:0000314"/>
    <property type="project" value="WormBase"/>
</dbReference>
<dbReference type="GO" id="GO:0045259">
    <property type="term" value="C:proton-transporting ATP synthase complex"/>
    <property type="evidence" value="ECO:0000314"/>
    <property type="project" value="WormBase"/>
</dbReference>
<dbReference type="GO" id="GO:0042407">
    <property type="term" value="P:cristae formation"/>
    <property type="evidence" value="ECO:0000315"/>
    <property type="project" value="WormBase"/>
</dbReference>
<dbReference type="GO" id="GO:0007005">
    <property type="term" value="P:mitochondrion organization"/>
    <property type="evidence" value="ECO:0000315"/>
    <property type="project" value="WormBase"/>
</dbReference>
<dbReference type="GO" id="GO:0000302">
    <property type="term" value="P:response to reactive oxygen species"/>
    <property type="evidence" value="ECO:0000315"/>
    <property type="project" value="WormBase"/>
</dbReference>
<dbReference type="InterPro" id="IPR019133">
    <property type="entry name" value="MIC60"/>
</dbReference>
<dbReference type="PANTHER" id="PTHR15415:SF13">
    <property type="entry name" value="MICOS COMPLEX SUBUNIT MIC60-2"/>
    <property type="match status" value="1"/>
</dbReference>
<dbReference type="PANTHER" id="PTHR15415">
    <property type="entry name" value="MITOFILIN"/>
    <property type="match status" value="1"/>
</dbReference>
<dbReference type="Pfam" id="PF09731">
    <property type="entry name" value="Mitofilin"/>
    <property type="match status" value="1"/>
</dbReference>
<comment type="function">
    <text evidence="1 5 6">Sustains mitochondrial morphology probably through maintaining cristae morphology (PubMed:20578245, PubMed:21248201). May act as a component of the MICOS complex, a large protein complex of the mitochondria (By similarity).</text>
</comment>
<comment type="subunit">
    <text evidence="1">Component of the mitochondrial contact site and cristae organizing system (MICOS) complex.</text>
</comment>
<comment type="subcellular location">
    <subcellularLocation>
        <location evidence="5">Mitochondrion inner membrane</location>
        <topology evidence="2">Single-pass membrane protein</topology>
    </subcellularLocation>
    <subcellularLocation>
        <location evidence="5">Cytoplasm</location>
    </subcellularLocation>
    <text evidence="5">Localized to cytoplasmic foci in embryos and gonads. Evenly distributed between the periphery and the cristae regions of the mitochondrion inner membrane.</text>
</comment>
<comment type="tissue specificity">
    <text evidence="5">Expressed in the gonads and muscle cells.</text>
</comment>
<comment type="developmental stage">
    <text evidence="5">Expressed in embryos.</text>
</comment>
<comment type="disruption phenotype">
    <text evidence="5 6">Egg-laying defects, defective oogenesis in 23% of mutants, reduced brood size and increased resistance to oxidative stress inducer paraquat (PubMed:20578245, PubMed:21248201). Abnormal mitochondrial morphology with mitochondria appearing larger, thinner and connected with large pores in the outer mitochondrial membrane (PubMed:21248201). Mitochondria also have elongated and curved cristae that are stacked with a reduced number of junctions (PubMed:21248201). Double knockout with immt-1 results in a more reduced brood size and enhanced resistance to paraquat-induced oxidative stress as compared to the single mutant, and in addition, mutants are slower swimmers, have increased hydrogen peroxide-induced reactive oxygen species (ROS), and reduced mitochondrial mass accompanied by reduced superoxide anion oxidation (PubMed:20578245).</text>
</comment>
<comment type="similarity">
    <text evidence="2 3">Belongs to the MICOS complex subunit Mic60 family.</text>
</comment>
<name>IMMT2_CAEEL</name>
<gene>
    <name evidence="11" type="primary">immt-2</name>
    <name evidence="11" type="ORF">W06H3.1</name>
</gene>
<proteinExistence type="evidence at transcript level"/>